<sequence length="1026" mass="116249">MSTFLRAVRDNIPEKDKSELTENDLKKWGLGAIHLRPYQLDGVKWLSLCMKNQQGCILGDEMGLGKTCQTISLLAYARGSLKMNGPFLVLCPLAVLENWRQELERFCPSLSVICYTGDKEKRAELQQNLKSDPRFHVLLTTYEMCLKDARYLKSWKWKILVVDEAHRLKNQESLLHQTLKEFTVGFRVLLTGTPIQNNLQEVYSLLTFIQPSVFLPEAVEDFVNAYADIQTEPALVDELHQVLQPFLLRRVKAEVAAELPKKTELVVFHGLSALQKRYYKAILMRDLDAFRTDQSTKTRLLNVLMQLRKCVDHPYLFDGVEPEPFEMGEHLVEASGKLSLLDSMLAYLQEGGHHVLLFSQMTRMLDILQDYLEYRGYSYERLDGSVRGEERNLAIKNFSTKDVFIFLLSTKAGGVGMNLTAADTVIFVDGDFNPQNDLQAAARAHRIGQTRPVKVIRLLGRDTIEEIIYSRAVSKLRLTDTVIEEGRFSLLDQAQSAASGLQLSEILKFGVDKLLSSEESSVQDVDLQLILGQSRDGQWLTDEEHAKLNESNEEEDEDMEGQNHMYYFEGKDYSKDPSAEDEKTFELLLEKQFAEMEDAEKEGRALRNKAGVSLSGPLINPARKKRPLTEAELEERRQKRQAAAAKRAKLQEERKKQQEELNYKKKMAWWDSCGYRSLCLPRVDSEGEDMEPDEDDHVSFSSTDSDHTAIRYVLGDVTHPQADREDAIIVHCVDDSGHWGRGGLFTALGLRSDEPRKQYELAGDMKDLELGNVLLFPVDDKQSRLCGRDYLALIVAQQRDKANKLSGIRLTALDEGLKKIYKAAKQKKASVHLPRIGHSTKGFNWYGTERLIRKHLATRGIFTSIYYYRRGSSHATVSSTASTTTPSSSKPAASSPSESPHSSSPPANREGLTKSAELSTTSHEGPGAPGLADFMRGVHVYFYNMAATEKKKLTRYLITYDGDEEDLMSSHVTHIVGEVESPVHKQELQDLLHQYPQALLVKKNWLESCFASQRKVSVSKYVIRLT</sequence>
<keyword id="KW-0067">ATP-binding</keyword>
<keyword id="KW-0158">Chromosome</keyword>
<keyword id="KW-0175">Coiled coil</keyword>
<keyword id="KW-0227">DNA damage</keyword>
<keyword id="KW-0234">DNA repair</keyword>
<keyword id="KW-0378">Hydrolase</keyword>
<keyword id="KW-0547">Nucleotide-binding</keyword>
<keyword id="KW-0539">Nucleus</keyword>
<keyword id="KW-1185">Reference proteome</keyword>
<accession>Q7ZU90</accession>
<protein>
    <recommendedName>
        <fullName>Chromodomain-helicase-DNA-binding protein 1-like</fullName>
        <ecNumber evidence="1">3.6.4.-</ecNumber>
    </recommendedName>
</protein>
<gene>
    <name type="primary">chd1l</name>
    <name type="ORF">zgc:56084</name>
</gene>
<name>CHD1L_DANRE</name>
<comment type="function">
    <text evidence="1">ATP-dependent chromatin remodeler that mediates chromatin-remodeling following DNA damage. Recruited to DNA damage sites through interaction with poly-ADP-ribose: specifically recognizes and binds histones that are poly-ADP-ribosylated on serine residues in response to DNA damage. Poly-ADP-ribose-binding activates the ATP-dependent chromatin remodeler activity, thereby regulating chromatin during DNA repair. Catalyzes nucleosome sliding away from DNA breaks in an ATP-dependent manner.</text>
</comment>
<comment type="catalytic activity">
    <reaction evidence="1">
        <text>ATP + H2O = ADP + phosphate + H(+)</text>
        <dbReference type="Rhea" id="RHEA:13065"/>
        <dbReference type="ChEBI" id="CHEBI:15377"/>
        <dbReference type="ChEBI" id="CHEBI:15378"/>
        <dbReference type="ChEBI" id="CHEBI:30616"/>
        <dbReference type="ChEBI" id="CHEBI:43474"/>
        <dbReference type="ChEBI" id="CHEBI:456216"/>
    </reaction>
    <physiologicalReaction direction="left-to-right" evidence="1">
        <dbReference type="Rhea" id="RHEA:13066"/>
    </physiologicalReaction>
</comment>
<comment type="activity regulation">
    <text evidence="1">Adopts an inactive conformation in absence of DNA damage. Binding to poly-ADP-ribosylated histones activates the ATP-dependent chromatin remodeler activity.</text>
</comment>
<comment type="subunit">
    <text evidence="1">Interacts with nucleosomes; interacts with the acidic patch of histones.</text>
</comment>
<comment type="subcellular location">
    <subcellularLocation>
        <location evidence="1">Nucleus</location>
    </subcellularLocation>
    <subcellularLocation>
        <location evidence="1">Chromosome</location>
    </subcellularLocation>
    <text evidence="1">Localizes at sites of DNA damage; recruited by histones H2B and H3 poly-ADP-ribosylated on 'Ser-6' and 'Ser-10', respectively (H2BS6ADPr and H3S10ADPr) by PARP1 or PARP2.</text>
</comment>
<comment type="domain">
    <text evidence="1">The macro domain mediates non-covalent poly(ADP-ribose)-binding and recruitment to DNA damage sites. Mediates auto-inhibition of ATPase activity by interacting with the N-terminal ATPase module, encompassing the helicase ATP-binding domain and helicase C-terminal domain. Binding to poly-ADP-ribosylated histones upon DNA damage releases the auto-inhibition by the macro domain and trigger ATPase activity. Does not bind monomeric ADP-ribose and mono-ADP-ribose fails to release the auto-inhibition of the ATPase module by the macro domain.</text>
</comment>
<comment type="similarity">
    <text evidence="8">Belongs to the SNF2/RAD54 helicase family.</text>
</comment>
<evidence type="ECO:0000250" key="1">
    <source>
        <dbReference type="UniProtKB" id="Q86WJ1"/>
    </source>
</evidence>
<evidence type="ECO:0000255" key="2"/>
<evidence type="ECO:0000255" key="3">
    <source>
        <dbReference type="PROSITE-ProRule" id="PRU00033"/>
    </source>
</evidence>
<evidence type="ECO:0000255" key="4">
    <source>
        <dbReference type="PROSITE-ProRule" id="PRU00490"/>
    </source>
</evidence>
<evidence type="ECO:0000255" key="5">
    <source>
        <dbReference type="PROSITE-ProRule" id="PRU00541"/>
    </source>
</evidence>
<evidence type="ECO:0000255" key="6">
    <source>
        <dbReference type="PROSITE-ProRule" id="PRU00542"/>
    </source>
</evidence>
<evidence type="ECO:0000256" key="7">
    <source>
        <dbReference type="SAM" id="MobiDB-lite"/>
    </source>
</evidence>
<evidence type="ECO:0000305" key="8"/>
<proteinExistence type="evidence at transcript level"/>
<reference key="1">
    <citation type="submission" date="2003-04" db="EMBL/GenBank/DDBJ databases">
        <authorList>
            <consortium name="NIH - Zebrafish Gene Collection (ZGC) project"/>
        </authorList>
    </citation>
    <scope>NUCLEOTIDE SEQUENCE [LARGE SCALE MRNA]</scope>
</reference>
<organism>
    <name type="scientific">Danio rerio</name>
    <name type="common">Zebrafish</name>
    <name type="synonym">Brachydanio rerio</name>
    <dbReference type="NCBI Taxonomy" id="7955"/>
    <lineage>
        <taxon>Eukaryota</taxon>
        <taxon>Metazoa</taxon>
        <taxon>Chordata</taxon>
        <taxon>Craniata</taxon>
        <taxon>Vertebrata</taxon>
        <taxon>Euteleostomi</taxon>
        <taxon>Actinopterygii</taxon>
        <taxon>Neopterygii</taxon>
        <taxon>Teleostei</taxon>
        <taxon>Ostariophysi</taxon>
        <taxon>Cypriniformes</taxon>
        <taxon>Danionidae</taxon>
        <taxon>Danioninae</taxon>
        <taxon>Danio</taxon>
    </lineage>
</organism>
<dbReference type="EC" id="3.6.4.-" evidence="1"/>
<dbReference type="EMBL" id="BC050498">
    <property type="protein sequence ID" value="AAH50498.1"/>
    <property type="molecule type" value="mRNA"/>
</dbReference>
<dbReference type="RefSeq" id="NP_956607.1">
    <property type="nucleotide sequence ID" value="NM_200313.1"/>
</dbReference>
<dbReference type="SMR" id="Q7ZU90"/>
<dbReference type="FunCoup" id="Q7ZU90">
    <property type="interactions" value="667"/>
</dbReference>
<dbReference type="STRING" id="7955.ENSDARP00000022305"/>
<dbReference type="PaxDb" id="7955-ENSDARP00000022305"/>
<dbReference type="GeneID" id="393283"/>
<dbReference type="KEGG" id="dre:393283"/>
<dbReference type="AGR" id="ZFIN:ZDB-GENE-040426-892"/>
<dbReference type="CTD" id="9557"/>
<dbReference type="ZFIN" id="ZDB-GENE-040426-892">
    <property type="gene designation" value="chd1l"/>
</dbReference>
<dbReference type="eggNOG" id="KOG0385">
    <property type="taxonomic scope" value="Eukaryota"/>
</dbReference>
<dbReference type="InParanoid" id="Q7ZU90"/>
<dbReference type="OrthoDB" id="5857104at2759"/>
<dbReference type="PhylomeDB" id="Q7ZU90"/>
<dbReference type="Reactome" id="R-DRE-5696395">
    <property type="pathway name" value="Formation of Incision Complex in GG-NER"/>
</dbReference>
<dbReference type="Reactome" id="R-DRE-5696400">
    <property type="pathway name" value="Dual Incision in GG-NER"/>
</dbReference>
<dbReference type="PRO" id="PR:Q7ZU90"/>
<dbReference type="Proteomes" id="UP000000437">
    <property type="component" value="Chromosome 6"/>
</dbReference>
<dbReference type="GO" id="GO:0005634">
    <property type="term" value="C:nucleus"/>
    <property type="evidence" value="ECO:0000250"/>
    <property type="project" value="UniProtKB"/>
</dbReference>
<dbReference type="GO" id="GO:0035861">
    <property type="term" value="C:site of double-strand break"/>
    <property type="evidence" value="ECO:0000250"/>
    <property type="project" value="UniProtKB"/>
</dbReference>
<dbReference type="GO" id="GO:0005524">
    <property type="term" value="F:ATP binding"/>
    <property type="evidence" value="ECO:0007669"/>
    <property type="project" value="UniProtKB-KW"/>
</dbReference>
<dbReference type="GO" id="GO:0016887">
    <property type="term" value="F:ATP hydrolysis activity"/>
    <property type="evidence" value="ECO:0000250"/>
    <property type="project" value="UniProtKB"/>
</dbReference>
<dbReference type="GO" id="GO:0140658">
    <property type="term" value="F:ATP-dependent chromatin remodeler activity"/>
    <property type="evidence" value="ECO:0000250"/>
    <property type="project" value="UniProtKB"/>
</dbReference>
<dbReference type="GO" id="GO:0003678">
    <property type="term" value="F:DNA helicase activity"/>
    <property type="evidence" value="ECO:0007669"/>
    <property type="project" value="InterPro"/>
</dbReference>
<dbReference type="GO" id="GO:0140566">
    <property type="term" value="F:histone reader activity"/>
    <property type="evidence" value="ECO:0000250"/>
    <property type="project" value="UniProtKB"/>
</dbReference>
<dbReference type="GO" id="GO:0031491">
    <property type="term" value="F:nucleosome binding"/>
    <property type="evidence" value="ECO:0000250"/>
    <property type="project" value="UniProtKB"/>
</dbReference>
<dbReference type="GO" id="GO:0000166">
    <property type="term" value="F:nucleotide binding"/>
    <property type="evidence" value="ECO:0000250"/>
    <property type="project" value="UniProtKB"/>
</dbReference>
<dbReference type="GO" id="GO:0160004">
    <property type="term" value="F:poly-ADP-D-ribose modification-dependent protein binding"/>
    <property type="evidence" value="ECO:0000250"/>
    <property type="project" value="UniProtKB"/>
</dbReference>
<dbReference type="GO" id="GO:0007420">
    <property type="term" value="P:brain development"/>
    <property type="evidence" value="ECO:0000315"/>
    <property type="project" value="ZFIN"/>
</dbReference>
<dbReference type="GO" id="GO:0006338">
    <property type="term" value="P:chromatin remodeling"/>
    <property type="evidence" value="ECO:0000250"/>
    <property type="project" value="UniProtKB"/>
</dbReference>
<dbReference type="GO" id="GO:0006974">
    <property type="term" value="P:DNA damage response"/>
    <property type="evidence" value="ECO:0000250"/>
    <property type="project" value="UniProtKB"/>
</dbReference>
<dbReference type="GO" id="GO:0006281">
    <property type="term" value="P:DNA repair"/>
    <property type="evidence" value="ECO:0007669"/>
    <property type="project" value="UniProtKB-KW"/>
</dbReference>
<dbReference type="CDD" id="cd18006">
    <property type="entry name" value="DEXHc_CHD1L"/>
    <property type="match status" value="1"/>
</dbReference>
<dbReference type="CDD" id="cd03331">
    <property type="entry name" value="Macro_Poa1p-like_SNF2"/>
    <property type="match status" value="1"/>
</dbReference>
<dbReference type="CDD" id="cd18793">
    <property type="entry name" value="SF2_C_SNF"/>
    <property type="match status" value="1"/>
</dbReference>
<dbReference type="FunFam" id="3.40.50.10190:FF:000178">
    <property type="entry name" value="Chromodomain-helicase-DNA-binding protein 1-like"/>
    <property type="match status" value="1"/>
</dbReference>
<dbReference type="FunFam" id="3.40.220.10:FF:000004">
    <property type="entry name" value="chromodomain-helicase-DNA-binding protein 1-like isoform X1"/>
    <property type="match status" value="1"/>
</dbReference>
<dbReference type="FunFam" id="3.40.50.10810:FF:000037">
    <property type="entry name" value="chromodomain-helicase-DNA-binding protein 1-like isoform X1"/>
    <property type="match status" value="1"/>
</dbReference>
<dbReference type="FunFam" id="3.40.50.300:FF:001488">
    <property type="entry name" value="Putative helicase CHR10"/>
    <property type="match status" value="1"/>
</dbReference>
<dbReference type="Gene3D" id="3.40.50.10190">
    <property type="entry name" value="BRCT domain"/>
    <property type="match status" value="1"/>
</dbReference>
<dbReference type="Gene3D" id="3.40.220.10">
    <property type="entry name" value="Leucine Aminopeptidase, subunit E, domain 1"/>
    <property type="match status" value="1"/>
</dbReference>
<dbReference type="Gene3D" id="3.40.50.300">
    <property type="entry name" value="P-loop containing nucleotide triphosphate hydrolases"/>
    <property type="match status" value="1"/>
</dbReference>
<dbReference type="Gene3D" id="3.40.50.10810">
    <property type="entry name" value="Tandem AAA-ATPase domain"/>
    <property type="match status" value="1"/>
</dbReference>
<dbReference type="InterPro" id="IPR031053">
    <property type="entry name" value="ALC1"/>
</dbReference>
<dbReference type="InterPro" id="IPR001357">
    <property type="entry name" value="BRCT_dom"/>
</dbReference>
<dbReference type="InterPro" id="IPR036420">
    <property type="entry name" value="BRCT_dom_sf"/>
</dbReference>
<dbReference type="InterPro" id="IPR014001">
    <property type="entry name" value="Helicase_ATP-bd"/>
</dbReference>
<dbReference type="InterPro" id="IPR001650">
    <property type="entry name" value="Helicase_C-like"/>
</dbReference>
<dbReference type="InterPro" id="IPR031916">
    <property type="entry name" value="LIG3_BRCT"/>
</dbReference>
<dbReference type="InterPro" id="IPR002589">
    <property type="entry name" value="Macro_dom"/>
</dbReference>
<dbReference type="InterPro" id="IPR043472">
    <property type="entry name" value="Macro_dom-like"/>
</dbReference>
<dbReference type="InterPro" id="IPR027417">
    <property type="entry name" value="P-loop_NTPase"/>
</dbReference>
<dbReference type="InterPro" id="IPR038718">
    <property type="entry name" value="SNF2-like_sf"/>
</dbReference>
<dbReference type="InterPro" id="IPR049730">
    <property type="entry name" value="SNF2/RAD54-like_C"/>
</dbReference>
<dbReference type="InterPro" id="IPR000330">
    <property type="entry name" value="SNF2_N"/>
</dbReference>
<dbReference type="PANTHER" id="PTHR47157">
    <property type="entry name" value="CHROMODOMAIN-HELICASE-DNA-BINDING PROTEIN 1-LIKE"/>
    <property type="match status" value="1"/>
</dbReference>
<dbReference type="PANTHER" id="PTHR47157:SF1">
    <property type="entry name" value="CHROMODOMAIN-HELICASE-DNA-BINDING PROTEIN 1-LIKE"/>
    <property type="match status" value="1"/>
</dbReference>
<dbReference type="Pfam" id="PF00271">
    <property type="entry name" value="Helicase_C"/>
    <property type="match status" value="1"/>
</dbReference>
<dbReference type="Pfam" id="PF16759">
    <property type="entry name" value="LIG3_BRCT"/>
    <property type="match status" value="1"/>
</dbReference>
<dbReference type="Pfam" id="PF00176">
    <property type="entry name" value="SNF2-rel_dom"/>
    <property type="match status" value="1"/>
</dbReference>
<dbReference type="SMART" id="SM00487">
    <property type="entry name" value="DEXDc"/>
    <property type="match status" value="1"/>
</dbReference>
<dbReference type="SMART" id="SM00490">
    <property type="entry name" value="HELICc"/>
    <property type="match status" value="1"/>
</dbReference>
<dbReference type="SUPFAM" id="SSF52113">
    <property type="entry name" value="BRCT domain"/>
    <property type="match status" value="1"/>
</dbReference>
<dbReference type="SUPFAM" id="SSF52949">
    <property type="entry name" value="Macro domain-like"/>
    <property type="match status" value="1"/>
</dbReference>
<dbReference type="SUPFAM" id="SSF52540">
    <property type="entry name" value="P-loop containing nucleoside triphosphate hydrolases"/>
    <property type="match status" value="2"/>
</dbReference>
<dbReference type="PROSITE" id="PS50172">
    <property type="entry name" value="BRCT"/>
    <property type="match status" value="1"/>
</dbReference>
<dbReference type="PROSITE" id="PS51192">
    <property type="entry name" value="HELICASE_ATP_BIND_1"/>
    <property type="match status" value="1"/>
</dbReference>
<dbReference type="PROSITE" id="PS51194">
    <property type="entry name" value="HELICASE_CTER"/>
    <property type="match status" value="1"/>
</dbReference>
<dbReference type="PROSITE" id="PS51154">
    <property type="entry name" value="MACRO"/>
    <property type="match status" value="1"/>
</dbReference>
<feature type="chain" id="PRO_0000332143" description="Chromodomain-helicase-DNA-binding protein 1-like">
    <location>
        <begin position="1"/>
        <end position="1026"/>
    </location>
</feature>
<feature type="domain" description="Helicase ATP-binding" evidence="5">
    <location>
        <begin position="47"/>
        <end position="212"/>
    </location>
</feature>
<feature type="domain" description="Helicase C-terminal" evidence="6">
    <location>
        <begin position="340"/>
        <end position="494"/>
    </location>
</feature>
<feature type="domain" description="Macro" evidence="4">
    <location>
        <begin position="697"/>
        <end position="870"/>
    </location>
</feature>
<feature type="domain" description="BRCT" evidence="3">
    <location>
        <begin position="930"/>
        <end position="1023"/>
    </location>
</feature>
<feature type="region of interest" description="Regulatory linker segment (RLS)" evidence="1">
    <location>
        <begin position="594"/>
        <end position="628"/>
    </location>
</feature>
<feature type="region of interest" description="Disordered" evidence="7">
    <location>
        <begin position="606"/>
        <end position="655"/>
    </location>
</feature>
<feature type="region of interest" description="Required for ATPase activity" evidence="1">
    <location>
        <begin position="608"/>
        <end position="666"/>
    </location>
</feature>
<feature type="region of interest" description="Disordered" evidence="7">
    <location>
        <begin position="877"/>
        <end position="929"/>
    </location>
</feature>
<feature type="coiled-coil region" evidence="2">
    <location>
        <begin position="540"/>
        <end position="668"/>
    </location>
</feature>
<feature type="short sequence motif" description="DEAH box">
    <location>
        <begin position="163"/>
        <end position="166"/>
    </location>
</feature>
<feature type="compositionally biased region" description="Low complexity" evidence="7">
    <location>
        <begin position="877"/>
        <end position="907"/>
    </location>
</feature>
<feature type="binding site" evidence="5">
    <location>
        <begin position="60"/>
        <end position="67"/>
    </location>
    <ligand>
        <name>ATP</name>
        <dbReference type="ChEBI" id="CHEBI:30616"/>
    </ligand>
</feature>